<sequence length="228" mass="25512">MAGRGGTGAAEYGEEGEEEEEEEAREGGAEGSPGSKLPPIVGTASELAKRKVKKKKKKKKTKGSGKGDADKHHSRGRKNQPLSSSFHDILNPHKDHGLRAEPRDKEENRQTLPYSYSINHPCFAEIEDTLSSQINESLRWDGILTDPEAEKERIRIYKLNRRKRYRLMALKCFHSDPCVEESVENLPYLSDKDCSPCSKQPSSKGDHAHSYFEASKLLHPELATTVAE</sequence>
<keyword id="KW-0963">Cytoplasm</keyword>
<keyword id="KW-0539">Nucleus</keyword>
<keyword id="KW-1185">Reference proteome</keyword>
<comment type="function">
    <text evidence="3 4">Participates in nucleolar liquid-liquid phase separation (LLPS) through its N-terminal intrinsically disordered region (IDR) (PubMed:33443146). May be involved in ATE1-mediated N-terminal arginylation (PubMed:25369936).</text>
</comment>
<comment type="subunit">
    <text evidence="3 4">Self-associates (via Lys-rich domain); targets LIAT1 to the nucleolus (PubMed:33443146). Interacts with ATE1; it is not a substrate of ATE1, the interaction takes place in the cytoplasm and seems to increase ATE1 arginyltransferase activity (PubMed:25369936, PubMed:33443146). Interacts with JMJD6 and MRPS14 (PubMed:25369936).</text>
</comment>
<comment type="subcellular location">
    <subcellularLocation>
        <location evidence="4">Nucleus</location>
        <location evidence="4">Nucleolus</location>
    </subcellularLocation>
    <subcellularLocation>
        <location evidence="4">Cytoplasm</location>
    </subcellularLocation>
    <text evidence="4">Shuttles between the cytoplasm and nucleoplasm, a significant portion localizes to the nucleolus.</text>
</comment>
<comment type="tissue specificity">
    <text evidence="3">Highly expressed in spleen, thymus, liver and brown adipose tissue. Moderately expressed in liver, testis and lung.</text>
</comment>
<comment type="domain">
    <text evidence="4">The N-terminal intrinsically disordered region (IDR) facilitates its liquid-liquid phase separation (LLPS) in the nucleolus (PubMed:33443146). In the IDR, the lysine-rich domain mediates self-association and targeting to the nucleolus (PubMed:33443146).</text>
</comment>
<comment type="domain">
    <text evidence="6">LIAT1 proteins of some primates, from macaques to humans, contain tandem repeats of a 10-residue sequence, whereas LIAT1 proteins of other mammals contain a single copy of this motif. Quantities of these repeats are, in general, different in LIAT1 of different primates. For example, there are 1, 4, 13, 13, 17, and 17 repeats in the gibbon, gorilla, orangutan, bonobo, neanderthal, and human LIAT1, respectively.</text>
</comment>
<comment type="PTM">
    <text evidence="4">Post-translationally modified by JMJD6 lysyl-hydroxylase activity at its Lys-rich domain, which inhibits its self-association and nucleolar localization.</text>
</comment>
<organism>
    <name type="scientific">Mus musculus</name>
    <name type="common">Mouse</name>
    <dbReference type="NCBI Taxonomy" id="10090"/>
    <lineage>
        <taxon>Eukaryota</taxon>
        <taxon>Metazoa</taxon>
        <taxon>Chordata</taxon>
        <taxon>Craniata</taxon>
        <taxon>Vertebrata</taxon>
        <taxon>Euteleostomi</taxon>
        <taxon>Mammalia</taxon>
        <taxon>Eutheria</taxon>
        <taxon>Euarchontoglires</taxon>
        <taxon>Glires</taxon>
        <taxon>Rodentia</taxon>
        <taxon>Myomorpha</taxon>
        <taxon>Muroidea</taxon>
        <taxon>Muridae</taxon>
        <taxon>Murinae</taxon>
        <taxon>Mus</taxon>
        <taxon>Mus</taxon>
    </lineage>
</organism>
<evidence type="ECO:0000250" key="1">
    <source>
        <dbReference type="UniProtKB" id="Q6ZQX7"/>
    </source>
</evidence>
<evidence type="ECO:0000256" key="2">
    <source>
        <dbReference type="SAM" id="MobiDB-lite"/>
    </source>
</evidence>
<evidence type="ECO:0000269" key="3">
    <source>
    </source>
</evidence>
<evidence type="ECO:0000269" key="4">
    <source>
    </source>
</evidence>
<evidence type="ECO:0000303" key="5">
    <source>
    </source>
</evidence>
<evidence type="ECO:0000305" key="6">
    <source>
    </source>
</evidence>
<evidence type="ECO:0000305" key="7">
    <source>
    </source>
</evidence>
<protein>
    <recommendedName>
        <fullName evidence="6">Protein LIAT1</fullName>
    </recommendedName>
    <alternativeName>
        <fullName evidence="6">Ligand of ATE1 protein</fullName>
    </alternativeName>
</protein>
<name>LIAT1_MOUSE</name>
<proteinExistence type="evidence at protein level"/>
<gene>
    <name evidence="5" type="primary">Liat1</name>
</gene>
<dbReference type="EMBL" id="AK132806">
    <property type="protein sequence ID" value="BAE21367.1"/>
    <property type="molecule type" value="mRNA"/>
</dbReference>
<dbReference type="EMBL" id="AL645569">
    <property type="status" value="NOT_ANNOTATED_CDS"/>
    <property type="molecule type" value="Genomic_DNA"/>
</dbReference>
<dbReference type="EMBL" id="BC049758">
    <property type="protein sequence ID" value="AAH49758.1"/>
    <property type="molecule type" value="mRNA"/>
</dbReference>
<dbReference type="CCDS" id="CCDS25059.1"/>
<dbReference type="RefSeq" id="NP_941039.1">
    <property type="nucleotide sequence ID" value="NM_198637.2"/>
</dbReference>
<dbReference type="FunCoup" id="Q810M6">
    <property type="interactions" value="9"/>
</dbReference>
<dbReference type="STRING" id="10090.ENSMUSP00000063358"/>
<dbReference type="PhosphoSitePlus" id="Q810M6"/>
<dbReference type="PaxDb" id="10090-ENSMUSP00000063358"/>
<dbReference type="Antibodypedia" id="10251">
    <property type="antibodies" value="42 antibodies from 12 providers"/>
</dbReference>
<dbReference type="Ensembl" id="ENSMUST00000066408.6">
    <property type="protein sequence ID" value="ENSMUSP00000063358.6"/>
    <property type="gene ID" value="ENSMUSG00000053783.6"/>
</dbReference>
<dbReference type="GeneID" id="74230"/>
<dbReference type="KEGG" id="mmu:74230"/>
<dbReference type="UCSC" id="uc007key.2">
    <property type="organism name" value="mouse"/>
</dbReference>
<dbReference type="AGR" id="MGI:1921480"/>
<dbReference type="CTD" id="400566"/>
<dbReference type="MGI" id="MGI:1921480">
    <property type="gene designation" value="Liat1"/>
</dbReference>
<dbReference type="VEuPathDB" id="HostDB:ENSMUSG00000053783"/>
<dbReference type="eggNOG" id="ENOG502SC86">
    <property type="taxonomic scope" value="Eukaryota"/>
</dbReference>
<dbReference type="GeneTree" id="ENSGT00440000038370"/>
<dbReference type="HOGENOM" id="CLU_083042_0_0_1"/>
<dbReference type="InParanoid" id="Q810M6"/>
<dbReference type="OMA" id="LKGFHTD"/>
<dbReference type="OrthoDB" id="10017439at2759"/>
<dbReference type="PhylomeDB" id="Q810M6"/>
<dbReference type="TreeFam" id="TF337007"/>
<dbReference type="BioGRID-ORCS" id="74230">
    <property type="hits" value="2 hits in 76 CRISPR screens"/>
</dbReference>
<dbReference type="PRO" id="PR:Q810M6"/>
<dbReference type="Proteomes" id="UP000000589">
    <property type="component" value="Chromosome 11"/>
</dbReference>
<dbReference type="RNAct" id="Q810M6">
    <property type="molecule type" value="protein"/>
</dbReference>
<dbReference type="Bgee" id="ENSMUSG00000053783">
    <property type="expression patterns" value="Expressed in seminiferous tubule of testis and 63 other cell types or tissues"/>
</dbReference>
<dbReference type="GO" id="GO:0005737">
    <property type="term" value="C:cytoplasm"/>
    <property type="evidence" value="ECO:0007669"/>
    <property type="project" value="UniProtKB-SubCell"/>
</dbReference>
<dbReference type="GO" id="GO:0005730">
    <property type="term" value="C:nucleolus"/>
    <property type="evidence" value="ECO:0000314"/>
    <property type="project" value="UniProt"/>
</dbReference>
<dbReference type="GO" id="GO:0140693">
    <property type="term" value="F:molecular condensate scaffold activity"/>
    <property type="evidence" value="ECO:0000314"/>
    <property type="project" value="UniProt"/>
</dbReference>
<dbReference type="GO" id="GO:0140694">
    <property type="term" value="P:membraneless organelle assembly"/>
    <property type="evidence" value="ECO:0000314"/>
    <property type="project" value="UniProt"/>
</dbReference>
<dbReference type="GO" id="GO:0016598">
    <property type="term" value="P:protein arginylation"/>
    <property type="evidence" value="ECO:0000314"/>
    <property type="project" value="UniProtKB"/>
</dbReference>
<dbReference type="InterPro" id="IPR038794">
    <property type="entry name" value="LIAT1"/>
</dbReference>
<dbReference type="PANTHER" id="PTHR36474">
    <property type="entry name" value="PROTEIN LIAT1"/>
    <property type="match status" value="1"/>
</dbReference>
<dbReference type="PANTHER" id="PTHR36474:SF1">
    <property type="entry name" value="PROTEIN LIAT1"/>
    <property type="match status" value="1"/>
</dbReference>
<reference key="1">
    <citation type="journal article" date="2005" name="Science">
        <title>The transcriptional landscape of the mammalian genome.</title>
        <authorList>
            <person name="Carninci P."/>
            <person name="Kasukawa T."/>
            <person name="Katayama S."/>
            <person name="Gough J."/>
            <person name="Frith M.C."/>
            <person name="Maeda N."/>
            <person name="Oyama R."/>
            <person name="Ravasi T."/>
            <person name="Lenhard B."/>
            <person name="Wells C."/>
            <person name="Kodzius R."/>
            <person name="Shimokawa K."/>
            <person name="Bajic V.B."/>
            <person name="Brenner S.E."/>
            <person name="Batalov S."/>
            <person name="Forrest A.R."/>
            <person name="Zavolan M."/>
            <person name="Davis M.J."/>
            <person name="Wilming L.G."/>
            <person name="Aidinis V."/>
            <person name="Allen J.E."/>
            <person name="Ambesi-Impiombato A."/>
            <person name="Apweiler R."/>
            <person name="Aturaliya R.N."/>
            <person name="Bailey T.L."/>
            <person name="Bansal M."/>
            <person name="Baxter L."/>
            <person name="Beisel K.W."/>
            <person name="Bersano T."/>
            <person name="Bono H."/>
            <person name="Chalk A.M."/>
            <person name="Chiu K.P."/>
            <person name="Choudhary V."/>
            <person name="Christoffels A."/>
            <person name="Clutterbuck D.R."/>
            <person name="Crowe M.L."/>
            <person name="Dalla E."/>
            <person name="Dalrymple B.P."/>
            <person name="de Bono B."/>
            <person name="Della Gatta G."/>
            <person name="di Bernardo D."/>
            <person name="Down T."/>
            <person name="Engstrom P."/>
            <person name="Fagiolini M."/>
            <person name="Faulkner G."/>
            <person name="Fletcher C.F."/>
            <person name="Fukushima T."/>
            <person name="Furuno M."/>
            <person name="Futaki S."/>
            <person name="Gariboldi M."/>
            <person name="Georgii-Hemming P."/>
            <person name="Gingeras T.R."/>
            <person name="Gojobori T."/>
            <person name="Green R.E."/>
            <person name="Gustincich S."/>
            <person name="Harbers M."/>
            <person name="Hayashi Y."/>
            <person name="Hensch T.K."/>
            <person name="Hirokawa N."/>
            <person name="Hill D."/>
            <person name="Huminiecki L."/>
            <person name="Iacono M."/>
            <person name="Ikeo K."/>
            <person name="Iwama A."/>
            <person name="Ishikawa T."/>
            <person name="Jakt M."/>
            <person name="Kanapin A."/>
            <person name="Katoh M."/>
            <person name="Kawasawa Y."/>
            <person name="Kelso J."/>
            <person name="Kitamura H."/>
            <person name="Kitano H."/>
            <person name="Kollias G."/>
            <person name="Krishnan S.P."/>
            <person name="Kruger A."/>
            <person name="Kummerfeld S.K."/>
            <person name="Kurochkin I.V."/>
            <person name="Lareau L.F."/>
            <person name="Lazarevic D."/>
            <person name="Lipovich L."/>
            <person name="Liu J."/>
            <person name="Liuni S."/>
            <person name="McWilliam S."/>
            <person name="Madan Babu M."/>
            <person name="Madera M."/>
            <person name="Marchionni L."/>
            <person name="Matsuda H."/>
            <person name="Matsuzawa S."/>
            <person name="Miki H."/>
            <person name="Mignone F."/>
            <person name="Miyake S."/>
            <person name="Morris K."/>
            <person name="Mottagui-Tabar S."/>
            <person name="Mulder N."/>
            <person name="Nakano N."/>
            <person name="Nakauchi H."/>
            <person name="Ng P."/>
            <person name="Nilsson R."/>
            <person name="Nishiguchi S."/>
            <person name="Nishikawa S."/>
            <person name="Nori F."/>
            <person name="Ohara O."/>
            <person name="Okazaki Y."/>
            <person name="Orlando V."/>
            <person name="Pang K.C."/>
            <person name="Pavan W.J."/>
            <person name="Pavesi G."/>
            <person name="Pesole G."/>
            <person name="Petrovsky N."/>
            <person name="Piazza S."/>
            <person name="Reed J."/>
            <person name="Reid J.F."/>
            <person name="Ring B.Z."/>
            <person name="Ringwald M."/>
            <person name="Rost B."/>
            <person name="Ruan Y."/>
            <person name="Salzberg S.L."/>
            <person name="Sandelin A."/>
            <person name="Schneider C."/>
            <person name="Schoenbach C."/>
            <person name="Sekiguchi K."/>
            <person name="Semple C.A."/>
            <person name="Seno S."/>
            <person name="Sessa L."/>
            <person name="Sheng Y."/>
            <person name="Shibata Y."/>
            <person name="Shimada H."/>
            <person name="Shimada K."/>
            <person name="Silva D."/>
            <person name="Sinclair B."/>
            <person name="Sperling S."/>
            <person name="Stupka E."/>
            <person name="Sugiura K."/>
            <person name="Sultana R."/>
            <person name="Takenaka Y."/>
            <person name="Taki K."/>
            <person name="Tammoja K."/>
            <person name="Tan S.L."/>
            <person name="Tang S."/>
            <person name="Taylor M.S."/>
            <person name="Tegner J."/>
            <person name="Teichmann S.A."/>
            <person name="Ueda H.R."/>
            <person name="van Nimwegen E."/>
            <person name="Verardo R."/>
            <person name="Wei C.L."/>
            <person name="Yagi K."/>
            <person name="Yamanishi H."/>
            <person name="Zabarovsky E."/>
            <person name="Zhu S."/>
            <person name="Zimmer A."/>
            <person name="Hide W."/>
            <person name="Bult C."/>
            <person name="Grimmond S.M."/>
            <person name="Teasdale R.D."/>
            <person name="Liu E.T."/>
            <person name="Brusic V."/>
            <person name="Quackenbush J."/>
            <person name="Wahlestedt C."/>
            <person name="Mattick J.S."/>
            <person name="Hume D.A."/>
            <person name="Kai C."/>
            <person name="Sasaki D."/>
            <person name="Tomaru Y."/>
            <person name="Fukuda S."/>
            <person name="Kanamori-Katayama M."/>
            <person name="Suzuki M."/>
            <person name="Aoki J."/>
            <person name="Arakawa T."/>
            <person name="Iida J."/>
            <person name="Imamura K."/>
            <person name="Itoh M."/>
            <person name="Kato T."/>
            <person name="Kawaji H."/>
            <person name="Kawagashira N."/>
            <person name="Kawashima T."/>
            <person name="Kojima M."/>
            <person name="Kondo S."/>
            <person name="Konno H."/>
            <person name="Nakano K."/>
            <person name="Ninomiya N."/>
            <person name="Nishio T."/>
            <person name="Okada M."/>
            <person name="Plessy C."/>
            <person name="Shibata K."/>
            <person name="Shiraki T."/>
            <person name="Suzuki S."/>
            <person name="Tagami M."/>
            <person name="Waki K."/>
            <person name="Watahiki A."/>
            <person name="Okamura-Oho Y."/>
            <person name="Suzuki H."/>
            <person name="Kawai J."/>
            <person name="Hayashizaki Y."/>
        </authorList>
    </citation>
    <scope>NUCLEOTIDE SEQUENCE [LARGE SCALE MRNA]</scope>
    <source>
        <strain>C57BL/6J</strain>
        <tissue>Testis</tissue>
    </source>
</reference>
<reference key="2">
    <citation type="journal article" date="2009" name="PLoS Biol.">
        <title>Lineage-specific biology revealed by a finished genome assembly of the mouse.</title>
        <authorList>
            <person name="Church D.M."/>
            <person name="Goodstadt L."/>
            <person name="Hillier L.W."/>
            <person name="Zody M.C."/>
            <person name="Goldstein S."/>
            <person name="She X."/>
            <person name="Bult C.J."/>
            <person name="Agarwala R."/>
            <person name="Cherry J.L."/>
            <person name="DiCuccio M."/>
            <person name="Hlavina W."/>
            <person name="Kapustin Y."/>
            <person name="Meric P."/>
            <person name="Maglott D."/>
            <person name="Birtle Z."/>
            <person name="Marques A.C."/>
            <person name="Graves T."/>
            <person name="Zhou S."/>
            <person name="Teague B."/>
            <person name="Potamousis K."/>
            <person name="Churas C."/>
            <person name="Place M."/>
            <person name="Herschleb J."/>
            <person name="Runnheim R."/>
            <person name="Forrest D."/>
            <person name="Amos-Landgraf J."/>
            <person name="Schwartz D.C."/>
            <person name="Cheng Z."/>
            <person name="Lindblad-Toh K."/>
            <person name="Eichler E.E."/>
            <person name="Ponting C.P."/>
        </authorList>
    </citation>
    <scope>NUCLEOTIDE SEQUENCE [LARGE SCALE GENOMIC DNA]</scope>
    <source>
        <strain>C57BL/6J</strain>
    </source>
</reference>
<reference key="3">
    <citation type="journal article" date="2004" name="Genome Res.">
        <title>The status, quality, and expansion of the NIH full-length cDNA project: the Mammalian Gene Collection (MGC).</title>
        <authorList>
            <consortium name="The MGC Project Team"/>
        </authorList>
    </citation>
    <scope>NUCLEOTIDE SEQUENCE [LARGE SCALE MRNA]</scope>
    <source>
        <tissue>Testis</tissue>
    </source>
</reference>
<reference key="4">
    <citation type="journal article" date="2014" name="Proc. Natl. Acad. Sci. U.S.A.">
        <title>Liat1, an arginyltransferase-binding protein whose evolution among primates involved changes in the numbers of its 10-residue repeats.</title>
        <authorList>
            <person name="Brower C.S."/>
            <person name="Rosen C.E."/>
            <person name="Jones R.H."/>
            <person name="Wadas B.C."/>
            <person name="Piatkov K.I."/>
            <person name="Varshavsky A."/>
        </authorList>
    </citation>
    <scope>FUNCTION</scope>
    <scope>INTERACTION WITH ATE1 AND MRPS14</scope>
    <scope>TISSUE SPECIFICITY</scope>
    <scope>DOMAIN</scope>
</reference>
<reference key="5">
    <citation type="journal article" date="2021" name="Proc. Natl. Acad. Sci. U.S.A.">
        <title>The Ligand of Ate1 is intrinsically disordered and participates in nucleolar phase separation regulated by Jumonji Domain Containing 6.</title>
        <authorList>
            <person name="Arva A."/>
            <person name="Kasu Y.A.T."/>
            <person name="Duncan J."/>
            <person name="Alkhatatbeh M.A."/>
            <person name="Brower C.S."/>
        </authorList>
    </citation>
    <scope>FUNCTION</scope>
    <scope>SUBCELLULAR LOCATION</scope>
    <scope>DOMAIN</scope>
    <scope>INTERACTION WITH ATE1</scope>
</reference>
<feature type="chain" id="PRO_0000340234" description="Protein LIAT1">
    <location>
        <begin position="1"/>
        <end position="228"/>
    </location>
</feature>
<feature type="repeat" description="1" evidence="1">
    <location>
        <begin position="169"/>
        <end position="178"/>
    </location>
</feature>
<feature type="region of interest" description="Disordered" evidence="2">
    <location>
        <begin position="1"/>
        <end position="108"/>
    </location>
</feature>
<feature type="region of interest" description="Lysine-rich domain" evidence="7">
    <location>
        <begin position="49"/>
        <end position="71"/>
    </location>
</feature>
<feature type="region of interest" description="Interaction with ATE1" evidence="3">
    <location>
        <begin position="113"/>
        <end position="165"/>
    </location>
</feature>
<feature type="compositionally biased region" description="Acidic residues" evidence="2">
    <location>
        <begin position="12"/>
        <end position="24"/>
    </location>
</feature>
<feature type="compositionally biased region" description="Basic residues" evidence="2">
    <location>
        <begin position="50"/>
        <end position="63"/>
    </location>
</feature>
<feature type="compositionally biased region" description="Basic and acidic residues" evidence="2">
    <location>
        <begin position="90"/>
        <end position="108"/>
    </location>
</feature>
<accession>Q810M6</accession>